<comment type="function">
    <text evidence="1">Catalyzes the attachment of L-aspartate to tRNA(Asp) in a two-step reaction: L-aspartate is first activated by ATP to form Asp-AMP and then transferred to the acceptor end of tRNA(Asp).</text>
</comment>
<comment type="catalytic activity">
    <reaction evidence="1">
        <text>tRNA(Asp) + L-aspartate + ATP = L-aspartyl-tRNA(Asp) + AMP + diphosphate</text>
        <dbReference type="Rhea" id="RHEA:19649"/>
        <dbReference type="Rhea" id="RHEA-COMP:9660"/>
        <dbReference type="Rhea" id="RHEA-COMP:9678"/>
        <dbReference type="ChEBI" id="CHEBI:29991"/>
        <dbReference type="ChEBI" id="CHEBI:30616"/>
        <dbReference type="ChEBI" id="CHEBI:33019"/>
        <dbReference type="ChEBI" id="CHEBI:78442"/>
        <dbReference type="ChEBI" id="CHEBI:78516"/>
        <dbReference type="ChEBI" id="CHEBI:456215"/>
        <dbReference type="EC" id="6.1.1.12"/>
    </reaction>
</comment>
<comment type="subunit">
    <text evidence="1">Homodimer.</text>
</comment>
<comment type="subcellular location">
    <subcellularLocation>
        <location evidence="1">Cytoplasm</location>
    </subcellularLocation>
</comment>
<comment type="similarity">
    <text evidence="1">Belongs to the class-II aminoacyl-tRNA synthetase family. Type 1 subfamily.</text>
</comment>
<sequence length="582" mass="65993">MKRSMYAGRVREEHIGTTITLKGWVSRRRDLGGLIFIDLRDREGVMQLVINPEEVSSDVMATAERLRSEYVIEVEGFVEARQQANDKLATGMVELKVSALTILNTAKTTPFEIKDDVEVSDDTRLRYRYLDLRRPEMLENFKLRAKVTHSIRNYLDDLEFIDVETPMLTKSTPEGARDYLVPSRVSQGHFYALPQSPQITKQLLMNAGFDRYYQIVKCFRDEDLRGDRQPEFTQVDLETSFLSEQEIQDIVEGMIAKVMKETKEIDVTLPLPRMSYDVAMNSYGSDKPDTRFEMLLQDLTVTVKGIDFKVFSEAPAVKAIVVKGNADRYSRKDIDKLTEFAKQFGAKGLAWVKVTDGQLAGPVAKFLTAIETELSSQLKLAENDLVLFVADTLEVANNTLGALRNRIAKDLDMIDQSQFNFLWVVDWPMFEWSEEEGRYMSAHHPFTLPTPESAHELEGDLAKVRAIAYDIVLNGYELGGGSLRINQKEMQERMFKALGFTADEANDQFGFLLEAMDYGFPPHGGLAIGLDRFVMLLAGKDNIREVIAFPKNNKASDPMTQAPSLVSENQLEELSLQIESHD</sequence>
<feature type="chain" id="PRO_0000110958" description="Aspartate--tRNA ligase">
    <location>
        <begin position="1"/>
        <end position="582"/>
    </location>
</feature>
<feature type="region of interest" description="Aspartate" evidence="1">
    <location>
        <begin position="198"/>
        <end position="201"/>
    </location>
</feature>
<feature type="binding site" evidence="1">
    <location>
        <position position="174"/>
    </location>
    <ligand>
        <name>L-aspartate</name>
        <dbReference type="ChEBI" id="CHEBI:29991"/>
    </ligand>
</feature>
<feature type="binding site" evidence="1">
    <location>
        <begin position="220"/>
        <end position="222"/>
    </location>
    <ligand>
        <name>ATP</name>
        <dbReference type="ChEBI" id="CHEBI:30616"/>
    </ligand>
</feature>
<feature type="binding site" evidence="1">
    <location>
        <position position="220"/>
    </location>
    <ligand>
        <name>L-aspartate</name>
        <dbReference type="ChEBI" id="CHEBI:29991"/>
    </ligand>
</feature>
<feature type="binding site" evidence="1">
    <location>
        <position position="229"/>
    </location>
    <ligand>
        <name>ATP</name>
        <dbReference type="ChEBI" id="CHEBI:30616"/>
    </ligand>
</feature>
<feature type="binding site" evidence="1">
    <location>
        <position position="443"/>
    </location>
    <ligand>
        <name>L-aspartate</name>
        <dbReference type="ChEBI" id="CHEBI:29991"/>
    </ligand>
</feature>
<feature type="binding site" evidence="1">
    <location>
        <position position="477"/>
    </location>
    <ligand>
        <name>ATP</name>
        <dbReference type="ChEBI" id="CHEBI:30616"/>
    </ligand>
</feature>
<feature type="binding site" evidence="1">
    <location>
        <position position="484"/>
    </location>
    <ligand>
        <name>L-aspartate</name>
        <dbReference type="ChEBI" id="CHEBI:29991"/>
    </ligand>
</feature>
<feature type="binding site" evidence="1">
    <location>
        <begin position="529"/>
        <end position="532"/>
    </location>
    <ligand>
        <name>ATP</name>
        <dbReference type="ChEBI" id="CHEBI:30616"/>
    </ligand>
</feature>
<proteinExistence type="inferred from homology"/>
<accession>P0DG30</accession>
<accession>Q8K5J0</accession>
<gene>
    <name evidence="1" type="primary">aspS</name>
    <name type="ordered locus">SpyM3_1814</name>
</gene>
<dbReference type="EC" id="6.1.1.12" evidence="1"/>
<dbReference type="EMBL" id="AE014074">
    <property type="protein sequence ID" value="AAM80421.1"/>
    <property type="molecule type" value="Genomic_DNA"/>
</dbReference>
<dbReference type="RefSeq" id="WP_011055095.1">
    <property type="nucleotide sequence ID" value="NC_004070.1"/>
</dbReference>
<dbReference type="SMR" id="P0DG30"/>
<dbReference type="KEGG" id="spg:SpyM3_1814"/>
<dbReference type="HOGENOM" id="CLU_014330_3_2_9"/>
<dbReference type="Proteomes" id="UP000000564">
    <property type="component" value="Chromosome"/>
</dbReference>
<dbReference type="GO" id="GO:0005737">
    <property type="term" value="C:cytoplasm"/>
    <property type="evidence" value="ECO:0007669"/>
    <property type="project" value="UniProtKB-SubCell"/>
</dbReference>
<dbReference type="GO" id="GO:0004815">
    <property type="term" value="F:aspartate-tRNA ligase activity"/>
    <property type="evidence" value="ECO:0007669"/>
    <property type="project" value="UniProtKB-UniRule"/>
</dbReference>
<dbReference type="GO" id="GO:0005524">
    <property type="term" value="F:ATP binding"/>
    <property type="evidence" value="ECO:0007669"/>
    <property type="project" value="UniProtKB-UniRule"/>
</dbReference>
<dbReference type="GO" id="GO:0140096">
    <property type="term" value="F:catalytic activity, acting on a protein"/>
    <property type="evidence" value="ECO:0007669"/>
    <property type="project" value="UniProtKB-ARBA"/>
</dbReference>
<dbReference type="GO" id="GO:0003676">
    <property type="term" value="F:nucleic acid binding"/>
    <property type="evidence" value="ECO:0007669"/>
    <property type="project" value="InterPro"/>
</dbReference>
<dbReference type="GO" id="GO:0016740">
    <property type="term" value="F:transferase activity"/>
    <property type="evidence" value="ECO:0007669"/>
    <property type="project" value="UniProtKB-ARBA"/>
</dbReference>
<dbReference type="GO" id="GO:0006422">
    <property type="term" value="P:aspartyl-tRNA aminoacylation"/>
    <property type="evidence" value="ECO:0007669"/>
    <property type="project" value="UniProtKB-UniRule"/>
</dbReference>
<dbReference type="CDD" id="cd00777">
    <property type="entry name" value="AspRS_core"/>
    <property type="match status" value="1"/>
</dbReference>
<dbReference type="CDD" id="cd04317">
    <property type="entry name" value="EcAspRS_like_N"/>
    <property type="match status" value="1"/>
</dbReference>
<dbReference type="Gene3D" id="3.30.930.10">
    <property type="entry name" value="Bira Bifunctional Protein, Domain 2"/>
    <property type="match status" value="1"/>
</dbReference>
<dbReference type="Gene3D" id="3.30.1360.30">
    <property type="entry name" value="GAD-like domain"/>
    <property type="match status" value="1"/>
</dbReference>
<dbReference type="Gene3D" id="2.40.50.140">
    <property type="entry name" value="Nucleic acid-binding proteins"/>
    <property type="match status" value="1"/>
</dbReference>
<dbReference type="HAMAP" id="MF_00044">
    <property type="entry name" value="Asp_tRNA_synth_type1"/>
    <property type="match status" value="1"/>
</dbReference>
<dbReference type="InterPro" id="IPR004364">
    <property type="entry name" value="Aa-tRNA-synt_II"/>
</dbReference>
<dbReference type="InterPro" id="IPR006195">
    <property type="entry name" value="aa-tRNA-synth_II"/>
</dbReference>
<dbReference type="InterPro" id="IPR045864">
    <property type="entry name" value="aa-tRNA-synth_II/BPL/LPL"/>
</dbReference>
<dbReference type="InterPro" id="IPR004524">
    <property type="entry name" value="Asp-tRNA-ligase_1"/>
</dbReference>
<dbReference type="InterPro" id="IPR047089">
    <property type="entry name" value="Asp-tRNA-ligase_1_N"/>
</dbReference>
<dbReference type="InterPro" id="IPR002312">
    <property type="entry name" value="Asp/Asn-tRNA-synth_IIb"/>
</dbReference>
<dbReference type="InterPro" id="IPR047090">
    <property type="entry name" value="AspRS_core"/>
</dbReference>
<dbReference type="InterPro" id="IPR004115">
    <property type="entry name" value="GAD-like_sf"/>
</dbReference>
<dbReference type="InterPro" id="IPR029351">
    <property type="entry name" value="GAD_dom"/>
</dbReference>
<dbReference type="InterPro" id="IPR012340">
    <property type="entry name" value="NA-bd_OB-fold"/>
</dbReference>
<dbReference type="InterPro" id="IPR004365">
    <property type="entry name" value="NA-bd_OB_tRNA"/>
</dbReference>
<dbReference type="NCBIfam" id="TIGR00459">
    <property type="entry name" value="aspS_bact"/>
    <property type="match status" value="1"/>
</dbReference>
<dbReference type="NCBIfam" id="NF001750">
    <property type="entry name" value="PRK00476.1"/>
    <property type="match status" value="1"/>
</dbReference>
<dbReference type="PANTHER" id="PTHR22594:SF5">
    <property type="entry name" value="ASPARTATE--TRNA LIGASE, MITOCHONDRIAL"/>
    <property type="match status" value="1"/>
</dbReference>
<dbReference type="PANTHER" id="PTHR22594">
    <property type="entry name" value="ASPARTYL/LYSYL-TRNA SYNTHETASE"/>
    <property type="match status" value="1"/>
</dbReference>
<dbReference type="Pfam" id="PF02938">
    <property type="entry name" value="GAD"/>
    <property type="match status" value="1"/>
</dbReference>
<dbReference type="Pfam" id="PF00152">
    <property type="entry name" value="tRNA-synt_2"/>
    <property type="match status" value="1"/>
</dbReference>
<dbReference type="Pfam" id="PF01336">
    <property type="entry name" value="tRNA_anti-codon"/>
    <property type="match status" value="1"/>
</dbReference>
<dbReference type="PRINTS" id="PR01042">
    <property type="entry name" value="TRNASYNTHASP"/>
</dbReference>
<dbReference type="SUPFAM" id="SSF55681">
    <property type="entry name" value="Class II aaRS and biotin synthetases"/>
    <property type="match status" value="1"/>
</dbReference>
<dbReference type="SUPFAM" id="SSF55261">
    <property type="entry name" value="GAD domain-like"/>
    <property type="match status" value="1"/>
</dbReference>
<dbReference type="SUPFAM" id="SSF50249">
    <property type="entry name" value="Nucleic acid-binding proteins"/>
    <property type="match status" value="1"/>
</dbReference>
<dbReference type="PROSITE" id="PS50862">
    <property type="entry name" value="AA_TRNA_LIGASE_II"/>
    <property type="match status" value="1"/>
</dbReference>
<evidence type="ECO:0000255" key="1">
    <source>
        <dbReference type="HAMAP-Rule" id="MF_00044"/>
    </source>
</evidence>
<organism>
    <name type="scientific">Streptococcus pyogenes serotype M3 (strain ATCC BAA-595 / MGAS315)</name>
    <dbReference type="NCBI Taxonomy" id="198466"/>
    <lineage>
        <taxon>Bacteria</taxon>
        <taxon>Bacillati</taxon>
        <taxon>Bacillota</taxon>
        <taxon>Bacilli</taxon>
        <taxon>Lactobacillales</taxon>
        <taxon>Streptococcaceae</taxon>
        <taxon>Streptococcus</taxon>
    </lineage>
</organism>
<name>SYD_STRP3</name>
<protein>
    <recommendedName>
        <fullName evidence="1">Aspartate--tRNA ligase</fullName>
        <ecNumber evidence="1">6.1.1.12</ecNumber>
    </recommendedName>
    <alternativeName>
        <fullName evidence="1">Aspartyl-tRNA synthetase</fullName>
        <shortName evidence="1">AspRS</shortName>
    </alternativeName>
</protein>
<keyword id="KW-0030">Aminoacyl-tRNA synthetase</keyword>
<keyword id="KW-0067">ATP-binding</keyword>
<keyword id="KW-0963">Cytoplasm</keyword>
<keyword id="KW-0436">Ligase</keyword>
<keyword id="KW-0547">Nucleotide-binding</keyword>
<keyword id="KW-0648">Protein biosynthesis</keyword>
<reference key="1">
    <citation type="journal article" date="2002" name="Proc. Natl. Acad. Sci. U.S.A.">
        <title>Genome sequence of a serotype M3 strain of group A Streptococcus: phage-encoded toxins, the high-virulence phenotype, and clone emergence.</title>
        <authorList>
            <person name="Beres S.B."/>
            <person name="Sylva G.L."/>
            <person name="Barbian K.D."/>
            <person name="Lei B."/>
            <person name="Hoff J.S."/>
            <person name="Mammarella N.D."/>
            <person name="Liu M.-Y."/>
            <person name="Smoot J.C."/>
            <person name="Porcella S.F."/>
            <person name="Parkins L.D."/>
            <person name="Campbell D.S."/>
            <person name="Smith T.M."/>
            <person name="McCormick J.K."/>
            <person name="Leung D.Y.M."/>
            <person name="Schlievert P.M."/>
            <person name="Musser J.M."/>
        </authorList>
    </citation>
    <scope>NUCLEOTIDE SEQUENCE [LARGE SCALE GENOMIC DNA]</scope>
    <source>
        <strain>ATCC BAA-595 / MGAS315</strain>
    </source>
</reference>